<proteinExistence type="inferred from homology"/>
<keyword id="KW-0067">ATP-binding</keyword>
<keyword id="KW-0963">Cytoplasm</keyword>
<keyword id="KW-0227">DNA damage</keyword>
<keyword id="KW-0234">DNA repair</keyword>
<keyword id="KW-0235">DNA replication</keyword>
<keyword id="KW-0238">DNA-binding</keyword>
<keyword id="KW-0547">Nucleotide-binding</keyword>
<keyword id="KW-0742">SOS response</keyword>
<accession>B2I5U9</accession>
<feature type="chain" id="PRO_1000121169" description="DNA replication and repair protein RecF">
    <location>
        <begin position="1"/>
        <end position="364"/>
    </location>
</feature>
<feature type="binding site" evidence="1">
    <location>
        <begin position="30"/>
        <end position="37"/>
    </location>
    <ligand>
        <name>ATP</name>
        <dbReference type="ChEBI" id="CHEBI:30616"/>
    </ligand>
</feature>
<protein>
    <recommendedName>
        <fullName evidence="1">DNA replication and repair protein RecF</fullName>
    </recommendedName>
</protein>
<organism>
    <name type="scientific">Xylella fastidiosa (strain M23)</name>
    <dbReference type="NCBI Taxonomy" id="405441"/>
    <lineage>
        <taxon>Bacteria</taxon>
        <taxon>Pseudomonadati</taxon>
        <taxon>Pseudomonadota</taxon>
        <taxon>Gammaproteobacteria</taxon>
        <taxon>Lysobacterales</taxon>
        <taxon>Lysobacteraceae</taxon>
        <taxon>Xylella</taxon>
    </lineage>
</organism>
<gene>
    <name evidence="1" type="primary">recF</name>
    <name type="ordered locus">XfasM23_0003</name>
</gene>
<name>RECF_XYLF2</name>
<evidence type="ECO:0000255" key="1">
    <source>
        <dbReference type="HAMAP-Rule" id="MF_00365"/>
    </source>
</evidence>
<sequence>MHITQLVLRHFRCFDVVDFFPLPGLNFFIGENGSGKTSLLEAVHLMGYGRSFRGRVRDGLIRHGSENLEIFVDWQETALINARRRRAGLSHYGQEWIGRLDGQKIMHLASLCAALAVITFESSSYQLINSNAELRRRFLDWGLFHVEPDFLDLWRRYTHVLKQRNSLLKQKEELAMLEAWDQKLSEVGEQLTFRRFQYLERLKQRVIPLISRITPNLKIHGFNFNHGWRRHELPLIDALFISRERDYQYGYTSLGPHRSDWTPQFSSIPGVHFLSRGQGKLITLMCLLAQAQDFFDQRGEWPILALDDLASELDQKHQWRVLEMLAEIPAQVLITGTEIPQGLKPFFSVGAMFHVEHGAITRMF</sequence>
<dbReference type="EMBL" id="CP001011">
    <property type="protein sequence ID" value="ACB91461.1"/>
    <property type="molecule type" value="Genomic_DNA"/>
</dbReference>
<dbReference type="RefSeq" id="WP_004087835.1">
    <property type="nucleotide sequence ID" value="NC_010577.1"/>
</dbReference>
<dbReference type="SMR" id="B2I5U9"/>
<dbReference type="GeneID" id="93903694"/>
<dbReference type="KEGG" id="xfn:XfasM23_0003"/>
<dbReference type="HOGENOM" id="CLU_040267_0_0_6"/>
<dbReference type="Proteomes" id="UP000001698">
    <property type="component" value="Chromosome"/>
</dbReference>
<dbReference type="GO" id="GO:0005737">
    <property type="term" value="C:cytoplasm"/>
    <property type="evidence" value="ECO:0007669"/>
    <property type="project" value="UniProtKB-SubCell"/>
</dbReference>
<dbReference type="GO" id="GO:0005524">
    <property type="term" value="F:ATP binding"/>
    <property type="evidence" value="ECO:0007669"/>
    <property type="project" value="UniProtKB-UniRule"/>
</dbReference>
<dbReference type="GO" id="GO:0003697">
    <property type="term" value="F:single-stranded DNA binding"/>
    <property type="evidence" value="ECO:0007669"/>
    <property type="project" value="UniProtKB-UniRule"/>
</dbReference>
<dbReference type="GO" id="GO:0006260">
    <property type="term" value="P:DNA replication"/>
    <property type="evidence" value="ECO:0007669"/>
    <property type="project" value="UniProtKB-UniRule"/>
</dbReference>
<dbReference type="GO" id="GO:0000731">
    <property type="term" value="P:DNA synthesis involved in DNA repair"/>
    <property type="evidence" value="ECO:0007669"/>
    <property type="project" value="TreeGrafter"/>
</dbReference>
<dbReference type="GO" id="GO:0006302">
    <property type="term" value="P:double-strand break repair"/>
    <property type="evidence" value="ECO:0007669"/>
    <property type="project" value="TreeGrafter"/>
</dbReference>
<dbReference type="GO" id="GO:0009432">
    <property type="term" value="P:SOS response"/>
    <property type="evidence" value="ECO:0007669"/>
    <property type="project" value="UniProtKB-UniRule"/>
</dbReference>
<dbReference type="Gene3D" id="3.40.50.300">
    <property type="entry name" value="P-loop containing nucleotide triphosphate hydrolases"/>
    <property type="match status" value="1"/>
</dbReference>
<dbReference type="Gene3D" id="1.20.1050.90">
    <property type="entry name" value="RecF/RecN/SMC, N-terminal domain"/>
    <property type="match status" value="1"/>
</dbReference>
<dbReference type="HAMAP" id="MF_00365">
    <property type="entry name" value="RecF"/>
    <property type="match status" value="1"/>
</dbReference>
<dbReference type="InterPro" id="IPR001238">
    <property type="entry name" value="DNA-binding_RecF"/>
</dbReference>
<dbReference type="InterPro" id="IPR018078">
    <property type="entry name" value="DNA-binding_RecF_CS"/>
</dbReference>
<dbReference type="InterPro" id="IPR027417">
    <property type="entry name" value="P-loop_NTPase"/>
</dbReference>
<dbReference type="InterPro" id="IPR003395">
    <property type="entry name" value="RecF/RecN/SMC_N"/>
</dbReference>
<dbReference type="InterPro" id="IPR042174">
    <property type="entry name" value="RecF_2"/>
</dbReference>
<dbReference type="NCBIfam" id="TIGR00611">
    <property type="entry name" value="recf"/>
    <property type="match status" value="1"/>
</dbReference>
<dbReference type="PANTHER" id="PTHR32182">
    <property type="entry name" value="DNA REPLICATION AND REPAIR PROTEIN RECF"/>
    <property type="match status" value="1"/>
</dbReference>
<dbReference type="PANTHER" id="PTHR32182:SF0">
    <property type="entry name" value="DNA REPLICATION AND REPAIR PROTEIN RECF"/>
    <property type="match status" value="1"/>
</dbReference>
<dbReference type="Pfam" id="PF02463">
    <property type="entry name" value="SMC_N"/>
    <property type="match status" value="1"/>
</dbReference>
<dbReference type="SUPFAM" id="SSF52540">
    <property type="entry name" value="P-loop containing nucleoside triphosphate hydrolases"/>
    <property type="match status" value="1"/>
</dbReference>
<dbReference type="PROSITE" id="PS00617">
    <property type="entry name" value="RECF_1"/>
    <property type="match status" value="1"/>
</dbReference>
<dbReference type="PROSITE" id="PS00618">
    <property type="entry name" value="RECF_2"/>
    <property type="match status" value="1"/>
</dbReference>
<comment type="function">
    <text evidence="1">The RecF protein is involved in DNA metabolism; it is required for DNA replication and normal SOS inducibility. RecF binds preferentially to single-stranded, linear DNA. It also seems to bind ATP.</text>
</comment>
<comment type="subcellular location">
    <subcellularLocation>
        <location evidence="1">Cytoplasm</location>
    </subcellularLocation>
</comment>
<comment type="similarity">
    <text evidence="1">Belongs to the RecF family.</text>
</comment>
<reference key="1">
    <citation type="journal article" date="2010" name="J. Bacteriol.">
        <title>Whole genome sequences of two Xylella fastidiosa strains (M12 and M23) causing almond leaf scorch disease in California.</title>
        <authorList>
            <person name="Chen J."/>
            <person name="Xie G."/>
            <person name="Han S."/>
            <person name="Chertkov O."/>
            <person name="Sims D."/>
            <person name="Civerolo E.L."/>
        </authorList>
    </citation>
    <scope>NUCLEOTIDE SEQUENCE [LARGE SCALE GENOMIC DNA]</scope>
    <source>
        <strain>M23</strain>
    </source>
</reference>